<protein>
    <recommendedName>
        <fullName evidence="1">Lysine--tRNA ligase</fullName>
        <ecNumber evidence="1">6.1.1.6</ecNumber>
    </recommendedName>
    <alternativeName>
        <fullName evidence="1">Lysyl-tRNA synthetase</fullName>
        <shortName evidence="1">LysRS</shortName>
    </alternativeName>
</protein>
<feature type="chain" id="PRO_1000101164" description="Lysine--tRNA ligase">
    <location>
        <begin position="1"/>
        <end position="505"/>
    </location>
</feature>
<feature type="binding site" evidence="1">
    <location>
        <position position="415"/>
    </location>
    <ligand>
        <name>Mg(2+)</name>
        <dbReference type="ChEBI" id="CHEBI:18420"/>
        <label>1</label>
    </ligand>
</feature>
<feature type="binding site" evidence="1">
    <location>
        <position position="422"/>
    </location>
    <ligand>
        <name>Mg(2+)</name>
        <dbReference type="ChEBI" id="CHEBI:18420"/>
        <label>1</label>
    </ligand>
</feature>
<feature type="binding site" evidence="1">
    <location>
        <position position="422"/>
    </location>
    <ligand>
        <name>Mg(2+)</name>
        <dbReference type="ChEBI" id="CHEBI:18420"/>
        <label>2</label>
    </ligand>
</feature>
<dbReference type="EC" id="6.1.1.6" evidence="1"/>
<dbReference type="EMBL" id="CP000901">
    <property type="protein sequence ID" value="ABX87443.1"/>
    <property type="molecule type" value="Genomic_DNA"/>
</dbReference>
<dbReference type="RefSeq" id="WP_002209930.1">
    <property type="nucleotide sequence ID" value="NZ_CP009935.1"/>
</dbReference>
<dbReference type="SMR" id="A9R4M4"/>
<dbReference type="GeneID" id="57973752"/>
<dbReference type="KEGG" id="ypg:YpAngola_A3851"/>
<dbReference type="PATRIC" id="fig|349746.12.peg.568"/>
<dbReference type="GO" id="GO:0005829">
    <property type="term" value="C:cytosol"/>
    <property type="evidence" value="ECO:0007669"/>
    <property type="project" value="TreeGrafter"/>
</dbReference>
<dbReference type="GO" id="GO:0005524">
    <property type="term" value="F:ATP binding"/>
    <property type="evidence" value="ECO:0007669"/>
    <property type="project" value="UniProtKB-UniRule"/>
</dbReference>
<dbReference type="GO" id="GO:0004824">
    <property type="term" value="F:lysine-tRNA ligase activity"/>
    <property type="evidence" value="ECO:0007669"/>
    <property type="project" value="UniProtKB-UniRule"/>
</dbReference>
<dbReference type="GO" id="GO:0000287">
    <property type="term" value="F:magnesium ion binding"/>
    <property type="evidence" value="ECO:0007669"/>
    <property type="project" value="UniProtKB-UniRule"/>
</dbReference>
<dbReference type="GO" id="GO:0000049">
    <property type="term" value="F:tRNA binding"/>
    <property type="evidence" value="ECO:0007669"/>
    <property type="project" value="TreeGrafter"/>
</dbReference>
<dbReference type="GO" id="GO:0006430">
    <property type="term" value="P:lysyl-tRNA aminoacylation"/>
    <property type="evidence" value="ECO:0007669"/>
    <property type="project" value="UniProtKB-UniRule"/>
</dbReference>
<dbReference type="CDD" id="cd00775">
    <property type="entry name" value="LysRS_core"/>
    <property type="match status" value="1"/>
</dbReference>
<dbReference type="CDD" id="cd04322">
    <property type="entry name" value="LysRS_N"/>
    <property type="match status" value="1"/>
</dbReference>
<dbReference type="FunFam" id="2.40.50.140:FF:000024">
    <property type="entry name" value="Lysine--tRNA ligase"/>
    <property type="match status" value="1"/>
</dbReference>
<dbReference type="FunFam" id="3.30.930.10:FF:000001">
    <property type="entry name" value="Lysine--tRNA ligase"/>
    <property type="match status" value="1"/>
</dbReference>
<dbReference type="Gene3D" id="3.30.930.10">
    <property type="entry name" value="Bira Bifunctional Protein, Domain 2"/>
    <property type="match status" value="1"/>
</dbReference>
<dbReference type="Gene3D" id="2.40.50.140">
    <property type="entry name" value="Nucleic acid-binding proteins"/>
    <property type="match status" value="1"/>
</dbReference>
<dbReference type="HAMAP" id="MF_00252">
    <property type="entry name" value="Lys_tRNA_synth_class2"/>
    <property type="match status" value="1"/>
</dbReference>
<dbReference type="InterPro" id="IPR004364">
    <property type="entry name" value="Aa-tRNA-synt_II"/>
</dbReference>
<dbReference type="InterPro" id="IPR006195">
    <property type="entry name" value="aa-tRNA-synth_II"/>
</dbReference>
<dbReference type="InterPro" id="IPR045864">
    <property type="entry name" value="aa-tRNA-synth_II/BPL/LPL"/>
</dbReference>
<dbReference type="InterPro" id="IPR002313">
    <property type="entry name" value="Lys-tRNA-ligase_II"/>
</dbReference>
<dbReference type="InterPro" id="IPR034762">
    <property type="entry name" value="Lys-tRNA-ligase_II_bac/euk"/>
</dbReference>
<dbReference type="InterPro" id="IPR044136">
    <property type="entry name" value="Lys-tRNA-ligase_II_N"/>
</dbReference>
<dbReference type="InterPro" id="IPR018149">
    <property type="entry name" value="Lys-tRNA-synth_II_C"/>
</dbReference>
<dbReference type="InterPro" id="IPR012340">
    <property type="entry name" value="NA-bd_OB-fold"/>
</dbReference>
<dbReference type="InterPro" id="IPR004365">
    <property type="entry name" value="NA-bd_OB_tRNA"/>
</dbReference>
<dbReference type="NCBIfam" id="TIGR00499">
    <property type="entry name" value="lysS_bact"/>
    <property type="match status" value="1"/>
</dbReference>
<dbReference type="NCBIfam" id="NF001756">
    <property type="entry name" value="PRK00484.1"/>
    <property type="match status" value="1"/>
</dbReference>
<dbReference type="PANTHER" id="PTHR42918:SF15">
    <property type="entry name" value="LYSINE--TRNA LIGASE, CHLOROPLASTIC_MITOCHONDRIAL"/>
    <property type="match status" value="1"/>
</dbReference>
<dbReference type="PANTHER" id="PTHR42918">
    <property type="entry name" value="LYSYL-TRNA SYNTHETASE"/>
    <property type="match status" value="1"/>
</dbReference>
<dbReference type="Pfam" id="PF00152">
    <property type="entry name" value="tRNA-synt_2"/>
    <property type="match status" value="1"/>
</dbReference>
<dbReference type="Pfam" id="PF01336">
    <property type="entry name" value="tRNA_anti-codon"/>
    <property type="match status" value="1"/>
</dbReference>
<dbReference type="PIRSF" id="PIRSF039101">
    <property type="entry name" value="LysRS2"/>
    <property type="match status" value="1"/>
</dbReference>
<dbReference type="PRINTS" id="PR00982">
    <property type="entry name" value="TRNASYNTHLYS"/>
</dbReference>
<dbReference type="SUPFAM" id="SSF55681">
    <property type="entry name" value="Class II aaRS and biotin synthetases"/>
    <property type="match status" value="1"/>
</dbReference>
<dbReference type="SUPFAM" id="SSF50249">
    <property type="entry name" value="Nucleic acid-binding proteins"/>
    <property type="match status" value="1"/>
</dbReference>
<dbReference type="PROSITE" id="PS50862">
    <property type="entry name" value="AA_TRNA_LIGASE_II"/>
    <property type="match status" value="1"/>
</dbReference>
<gene>
    <name evidence="1" type="primary">lysS</name>
    <name type="ordered locus">YpAngola_A3851</name>
</gene>
<organism>
    <name type="scientific">Yersinia pestis bv. Antiqua (strain Angola)</name>
    <dbReference type="NCBI Taxonomy" id="349746"/>
    <lineage>
        <taxon>Bacteria</taxon>
        <taxon>Pseudomonadati</taxon>
        <taxon>Pseudomonadota</taxon>
        <taxon>Gammaproteobacteria</taxon>
        <taxon>Enterobacterales</taxon>
        <taxon>Yersiniaceae</taxon>
        <taxon>Yersinia</taxon>
    </lineage>
</organism>
<accession>A9R4M4</accession>
<comment type="catalytic activity">
    <reaction evidence="1">
        <text>tRNA(Lys) + L-lysine + ATP = L-lysyl-tRNA(Lys) + AMP + diphosphate</text>
        <dbReference type="Rhea" id="RHEA:20792"/>
        <dbReference type="Rhea" id="RHEA-COMP:9696"/>
        <dbReference type="Rhea" id="RHEA-COMP:9697"/>
        <dbReference type="ChEBI" id="CHEBI:30616"/>
        <dbReference type="ChEBI" id="CHEBI:32551"/>
        <dbReference type="ChEBI" id="CHEBI:33019"/>
        <dbReference type="ChEBI" id="CHEBI:78442"/>
        <dbReference type="ChEBI" id="CHEBI:78529"/>
        <dbReference type="ChEBI" id="CHEBI:456215"/>
        <dbReference type="EC" id="6.1.1.6"/>
    </reaction>
</comment>
<comment type="cofactor">
    <cofactor evidence="1">
        <name>Mg(2+)</name>
        <dbReference type="ChEBI" id="CHEBI:18420"/>
    </cofactor>
    <text evidence="1">Binds 3 Mg(2+) ions per subunit.</text>
</comment>
<comment type="subunit">
    <text evidence="1">Homodimer.</text>
</comment>
<comment type="subcellular location">
    <subcellularLocation>
        <location evidence="1">Cytoplasm</location>
    </subcellularLocation>
</comment>
<comment type="similarity">
    <text evidence="1">Belongs to the class-II aminoacyl-tRNA synthetase family.</text>
</comment>
<sequence length="505" mass="57577">MSEQKPQVAEQAQELNSELQARREKLAVLRGKGIAFPNDFRRENLSDQLHAEFDSKENEELEALNIDVTVAGRMMTRRIMGKASFVTLQDVGGRIQLYVSRDDLPEGVYNEEFKKWDLGDILGARGKLFKTKTGELSIHCSELRLLTKALRPLPDKFHGLADQETRYRQRYLDLIANDESRHTFKVRSQVMSGIRSFMVEKGFMEVETPMMQVIPGGASARPFVTHHNALDIDMYLRIAPELYLKRLVVGGFERVFEINRNFRNEGVSPRHNPEFTMMELYMAYADYKDLIVLTEELFRTLTETILGSSVVQYGEQTFDFGKPFAKLTMKEAICKYRPETNVADLDDMDKAVAIAESLGIKVEKSWGLGRIQCEIFEETAESHLIQPTFITEYPAEVSPLARRNDDNPFITDRFEFFIGGREIGNGFSELNDAEDQAQRFADQVSAKEAGDDEAMFYDEDYITALEHGLPPTAGLGIGIDRMVMLFTNSHTIRDVILFPAMRPVK</sequence>
<reference key="1">
    <citation type="journal article" date="2010" name="J. Bacteriol.">
        <title>Genome sequence of the deep-rooted Yersinia pestis strain Angola reveals new insights into the evolution and pangenome of the plague bacterium.</title>
        <authorList>
            <person name="Eppinger M."/>
            <person name="Worsham P.L."/>
            <person name="Nikolich M.P."/>
            <person name="Riley D.R."/>
            <person name="Sebastian Y."/>
            <person name="Mou S."/>
            <person name="Achtman M."/>
            <person name="Lindler L.E."/>
            <person name="Ravel J."/>
        </authorList>
    </citation>
    <scope>NUCLEOTIDE SEQUENCE [LARGE SCALE GENOMIC DNA]</scope>
    <source>
        <strain>Angola</strain>
    </source>
</reference>
<proteinExistence type="inferred from homology"/>
<evidence type="ECO:0000255" key="1">
    <source>
        <dbReference type="HAMAP-Rule" id="MF_00252"/>
    </source>
</evidence>
<keyword id="KW-0030">Aminoacyl-tRNA synthetase</keyword>
<keyword id="KW-0067">ATP-binding</keyword>
<keyword id="KW-0963">Cytoplasm</keyword>
<keyword id="KW-0436">Ligase</keyword>
<keyword id="KW-0460">Magnesium</keyword>
<keyword id="KW-0479">Metal-binding</keyword>
<keyword id="KW-0547">Nucleotide-binding</keyword>
<keyword id="KW-0648">Protein biosynthesis</keyword>
<name>SYK_YERPG</name>